<protein>
    <recommendedName>
        <fullName>U-box domain-containing protein 8</fullName>
        <ecNumber>2.3.2.27</ecNumber>
    </recommendedName>
    <alternativeName>
        <fullName>Plant U-box protein 8</fullName>
    </alternativeName>
    <alternativeName>
        <fullName evidence="5">RING-type E3 ubiquitin transferase PUB8</fullName>
    </alternativeName>
</protein>
<sequence>MAFDLPNDFRCPISLEIMSDPVILQSGHTFDRVSIQQWIDSGNRTCPITKLPLSETPYLIPNHALRSLILNFAHVSLKESSRPRTQQEHSHSQSQALISTLVSQSSSNASKLESLTRLVRLTKRDSSIRRKVTESGAVRAALDCVDSCNQVLQEKSLSLLLNLSLEDDNKVGLVADGVIRRIVTVLRVGSPDCKAIAATLLTSLAVVEVNKATIGSYPDAISALVSLLRVGNDRERKESATALYALCSFPDNRKRVVDCGSVPILVEAADSGLERAVEVLGLLVKCRGGREEMSKVSGFVEVLVNVLRNGNLKGIQYSLFILNCLCCCSGEIVDEVKREGVVEICFGFEDNESEKIRRNATILVHTLLGIPMSS</sequence>
<comment type="function">
    <text evidence="1 3">Functions as an E3 ubiquitin ligase (By similarity). Involved in the age-dependent pseudo-self-compatibility process.</text>
</comment>
<comment type="catalytic activity">
    <reaction>
        <text>S-ubiquitinyl-[E2 ubiquitin-conjugating enzyme]-L-cysteine + [acceptor protein]-L-lysine = [E2 ubiquitin-conjugating enzyme]-L-cysteine + N(6)-ubiquitinyl-[acceptor protein]-L-lysine.</text>
        <dbReference type="EC" id="2.3.2.27"/>
    </reaction>
</comment>
<comment type="pathway">
    <text>Protein modification; protein ubiquitination.</text>
</comment>
<comment type="tissue specificity">
    <text evidence="3">Expressed in the whole plant.</text>
</comment>
<name>PUB8_ARATH</name>
<accession>O81902</accession>
<accession>A3RCC8</accession>
<accession>A7Y5W2</accession>
<gene>
    <name type="primary">PUB8</name>
    <name type="synonym">B80</name>
    <name type="ordered locus">At4g21350</name>
    <name type="ORF">T6K22.80</name>
</gene>
<dbReference type="EC" id="2.3.2.27"/>
<dbReference type="EMBL" id="EF182720">
    <property type="protein sequence ID" value="ABN05290.1"/>
    <property type="molecule type" value="Genomic_DNA"/>
</dbReference>
<dbReference type="EMBL" id="EF637083">
    <property type="protein sequence ID" value="ABV21211.1"/>
    <property type="molecule type" value="Genomic_DNA"/>
</dbReference>
<dbReference type="EMBL" id="AL031187">
    <property type="protein sequence ID" value="CAA20200.1"/>
    <property type="molecule type" value="Genomic_DNA"/>
</dbReference>
<dbReference type="EMBL" id="AL161554">
    <property type="protein sequence ID" value="CAB79134.1"/>
    <property type="molecule type" value="Genomic_DNA"/>
</dbReference>
<dbReference type="EMBL" id="CP002687">
    <property type="protein sequence ID" value="AEE84444.1"/>
    <property type="molecule type" value="Genomic_DNA"/>
</dbReference>
<dbReference type="PIR" id="T05177">
    <property type="entry name" value="T05177"/>
</dbReference>
<dbReference type="RefSeq" id="NP_193866.1">
    <property type="nucleotide sequence ID" value="NM_118255.1"/>
</dbReference>
<dbReference type="SMR" id="O81902"/>
<dbReference type="FunCoup" id="O81902">
    <property type="interactions" value="386"/>
</dbReference>
<dbReference type="STRING" id="3702.O81902"/>
<dbReference type="iPTMnet" id="O81902"/>
<dbReference type="PaxDb" id="3702-AT4G21350.1"/>
<dbReference type="EnsemblPlants" id="AT4G21350.1">
    <property type="protein sequence ID" value="AT4G21350.1"/>
    <property type="gene ID" value="AT4G21350"/>
</dbReference>
<dbReference type="GeneID" id="827885"/>
<dbReference type="Gramene" id="AT4G21350.1">
    <property type="protein sequence ID" value="AT4G21350.1"/>
    <property type="gene ID" value="AT4G21350"/>
</dbReference>
<dbReference type="KEGG" id="ath:AT4G21350"/>
<dbReference type="Araport" id="AT4G21350"/>
<dbReference type="TAIR" id="AT4G21350">
    <property type="gene designation" value="PUB8"/>
</dbReference>
<dbReference type="eggNOG" id="KOG0167">
    <property type="taxonomic scope" value="Eukaryota"/>
</dbReference>
<dbReference type="HOGENOM" id="CLU_006348_0_0_1"/>
<dbReference type="InParanoid" id="O81902"/>
<dbReference type="OMA" id="CVDSDEP"/>
<dbReference type="PhylomeDB" id="O81902"/>
<dbReference type="UniPathway" id="UPA00143"/>
<dbReference type="PRO" id="PR:O81902"/>
<dbReference type="Proteomes" id="UP000006548">
    <property type="component" value="Chromosome 4"/>
</dbReference>
<dbReference type="ExpressionAtlas" id="O81902">
    <property type="expression patterns" value="baseline and differential"/>
</dbReference>
<dbReference type="GO" id="GO:0004842">
    <property type="term" value="F:ubiquitin-protein transferase activity"/>
    <property type="evidence" value="ECO:0007669"/>
    <property type="project" value="InterPro"/>
</dbReference>
<dbReference type="GO" id="GO:0016567">
    <property type="term" value="P:protein ubiquitination"/>
    <property type="evidence" value="ECO:0000303"/>
    <property type="project" value="TAIR"/>
</dbReference>
<dbReference type="CDD" id="cd16664">
    <property type="entry name" value="RING-Ubox_PUB"/>
    <property type="match status" value="1"/>
</dbReference>
<dbReference type="FunFam" id="1.25.10.10:FF:000892">
    <property type="entry name" value="RING-type E3 ubiquitin transferase"/>
    <property type="match status" value="1"/>
</dbReference>
<dbReference type="FunFam" id="3.30.40.10:FF:000809">
    <property type="entry name" value="RING-type E3 ubiquitin transferase"/>
    <property type="match status" value="1"/>
</dbReference>
<dbReference type="Gene3D" id="1.25.10.10">
    <property type="entry name" value="Leucine-rich Repeat Variant"/>
    <property type="match status" value="1"/>
</dbReference>
<dbReference type="Gene3D" id="3.30.40.10">
    <property type="entry name" value="Zinc/RING finger domain, C3HC4 (zinc finger)"/>
    <property type="match status" value="1"/>
</dbReference>
<dbReference type="InterPro" id="IPR011989">
    <property type="entry name" value="ARM-like"/>
</dbReference>
<dbReference type="InterPro" id="IPR016024">
    <property type="entry name" value="ARM-type_fold"/>
</dbReference>
<dbReference type="InterPro" id="IPR000225">
    <property type="entry name" value="Armadillo"/>
</dbReference>
<dbReference type="InterPro" id="IPR045210">
    <property type="entry name" value="RING-Ubox_PUB"/>
</dbReference>
<dbReference type="InterPro" id="IPR003613">
    <property type="entry name" value="Ubox_domain"/>
</dbReference>
<dbReference type="InterPro" id="IPR013083">
    <property type="entry name" value="Znf_RING/FYVE/PHD"/>
</dbReference>
<dbReference type="PANTHER" id="PTHR23315">
    <property type="entry name" value="U BOX DOMAIN-CONTAINING"/>
    <property type="match status" value="1"/>
</dbReference>
<dbReference type="PANTHER" id="PTHR23315:SF112">
    <property type="entry name" value="U-BOX DOMAIN-CONTAINING PROTEIN 8"/>
    <property type="match status" value="1"/>
</dbReference>
<dbReference type="Pfam" id="PF04564">
    <property type="entry name" value="U-box"/>
    <property type="match status" value="1"/>
</dbReference>
<dbReference type="SMART" id="SM00185">
    <property type="entry name" value="ARM"/>
    <property type="match status" value="4"/>
</dbReference>
<dbReference type="SMART" id="SM00504">
    <property type="entry name" value="Ubox"/>
    <property type="match status" value="1"/>
</dbReference>
<dbReference type="SUPFAM" id="SSF48371">
    <property type="entry name" value="ARM repeat"/>
    <property type="match status" value="1"/>
</dbReference>
<dbReference type="SUPFAM" id="SSF57850">
    <property type="entry name" value="RING/U-box"/>
    <property type="match status" value="1"/>
</dbReference>
<dbReference type="PROSITE" id="PS51698">
    <property type="entry name" value="U_BOX"/>
    <property type="match status" value="1"/>
</dbReference>
<organism>
    <name type="scientific">Arabidopsis thaliana</name>
    <name type="common">Mouse-ear cress</name>
    <dbReference type="NCBI Taxonomy" id="3702"/>
    <lineage>
        <taxon>Eukaryota</taxon>
        <taxon>Viridiplantae</taxon>
        <taxon>Streptophyta</taxon>
        <taxon>Embryophyta</taxon>
        <taxon>Tracheophyta</taxon>
        <taxon>Spermatophyta</taxon>
        <taxon>Magnoliopsida</taxon>
        <taxon>eudicotyledons</taxon>
        <taxon>Gunneridae</taxon>
        <taxon>Pentapetalae</taxon>
        <taxon>rosids</taxon>
        <taxon>malvids</taxon>
        <taxon>Brassicales</taxon>
        <taxon>Brassicaceae</taxon>
        <taxon>Camelineae</taxon>
        <taxon>Arabidopsis</taxon>
    </lineage>
</organism>
<proteinExistence type="evidence at transcript level"/>
<keyword id="KW-1185">Reference proteome</keyword>
<keyword id="KW-0677">Repeat</keyword>
<keyword id="KW-0808">Transferase</keyword>
<keyword id="KW-0833">Ubl conjugation pathway</keyword>
<evidence type="ECO:0000250" key="1"/>
<evidence type="ECO:0000269" key="2">
    <source>
    </source>
</evidence>
<evidence type="ECO:0000269" key="3">
    <source>
    </source>
</evidence>
<evidence type="ECO:0000269" key="4">
    <source>
    </source>
</evidence>
<evidence type="ECO:0000305" key="5"/>
<feature type="chain" id="PRO_0000322153" description="U-box domain-containing protein 8">
    <location>
        <begin position="1"/>
        <end position="374"/>
    </location>
</feature>
<feature type="domain" description="U-box">
    <location>
        <begin position="4"/>
        <end position="79"/>
    </location>
</feature>
<feature type="repeat" description="ARM 1">
    <location>
        <begin position="126"/>
        <end position="165"/>
    </location>
</feature>
<feature type="repeat" description="ARM 2">
    <location>
        <begin position="167"/>
        <end position="206"/>
    </location>
</feature>
<feature type="repeat" description="ARM 3">
    <location>
        <begin position="208"/>
        <end position="248"/>
    </location>
</feature>
<feature type="repeat" description="ARM 4">
    <location>
        <begin position="250"/>
        <end position="288"/>
    </location>
</feature>
<feature type="repeat" description="ARM 5">
    <location>
        <begin position="289"/>
        <end position="327"/>
    </location>
</feature>
<feature type="sequence variant" description="In strain: cv. C24 and cv. Cvi-0." evidence="2 4">
    <original>Y</original>
    <variation>S</variation>
    <location>
        <position position="58"/>
    </location>
</feature>
<feature type="sequence variant" description="In strain: cv. Cvi-0." evidence="4">
    <original>L</original>
    <variation>S</variation>
    <location>
        <position position="70"/>
    </location>
</feature>
<feature type="sequence variant" description="In strain: cv. C24 and cv. Cvi-0." evidence="2 4">
    <original>L</original>
    <variation>P</variation>
    <location>
        <position position="77"/>
    </location>
</feature>
<feature type="sequence variant" description="In strain: cv. Cvi-0." evidence="4">
    <original>H</original>
    <variation>Q</variation>
    <location>
        <position position="91"/>
    </location>
</feature>
<feature type="sequence variant" description="In strain: cv. C24 and cv. Cvi-0." evidence="2 4">
    <original>Q</original>
    <variation>R</variation>
    <location>
        <position position="104"/>
    </location>
</feature>
<feature type="sequence variant" description="In strain: cv. C24." evidence="2">
    <original>I</original>
    <variation>V</variation>
    <location>
        <position position="179"/>
    </location>
</feature>
<feature type="sequence variant" description="In strain: cv. C24 and cv. Cvi-0." evidence="2 4">
    <original>T</original>
    <variation>A</variation>
    <location>
        <position position="184"/>
    </location>
</feature>
<feature type="sequence variant" description="In strain: cv. Cvi-0." evidence="4">
    <original>P</original>
    <variation>A</variation>
    <location>
        <position position="191"/>
    </location>
</feature>
<feature type="sequence variant" description="In strain: cv. C24." evidence="2">
    <original>R</original>
    <variation>K</variation>
    <location>
        <position position="308"/>
    </location>
</feature>
<feature type="sequence variant" description="In strain: cv. Cvi-0." evidence="4">
    <original>N</original>
    <variation>S</variation>
    <location>
        <position position="311"/>
    </location>
</feature>
<feature type="sequence variant" description="In strain: cv. Cvi-0." evidence="4">
    <original>G</original>
    <variation>R</variation>
    <location>
        <position position="330"/>
    </location>
</feature>
<feature type="sequence variant" description="In strain: cv. C24 and cv. Cvi-0." evidence="2 4">
    <original>T</original>
    <variation>N</variation>
    <location>
        <position position="366"/>
    </location>
</feature>
<reference key="1">
    <citation type="journal article" date="2007" name="Plant Cell">
        <title>S locus genes and the evolution of self-fertility in Arabidopsis thaliana.</title>
        <authorList>
            <person name="Sherman-Broyles S."/>
            <person name="Boggs N."/>
            <person name="Farkas A."/>
            <person name="Liu P."/>
            <person name="Vrebalov J."/>
            <person name="Nasrallah M.E."/>
            <person name="Nasrallah J.B."/>
        </authorList>
    </citation>
    <scope>NUCLEOTIDE SEQUENCE [GENOMIC DNA]</scope>
    <scope>VARIANTS SER-58; PRO-77; ARG-104; VAL-179; ALA-184; LYS-308 AND ASN-366</scope>
    <source>
        <strain>cv. C24</strain>
    </source>
</reference>
<reference key="2">
    <citation type="journal article" date="2007" name="Science">
        <title>The evolution of selfing in Arabidopsis thaliana.</title>
        <authorList>
            <person name="Tang C."/>
            <person name="Toomajian C."/>
            <person name="Sherman-Broyles S."/>
            <person name="Plagnol V."/>
            <person name="Guo Y.-L."/>
            <person name="Hu T.T."/>
            <person name="Clark R.M."/>
            <person name="Nasrallah J.B."/>
            <person name="Weigel D."/>
            <person name="Nordborg M."/>
        </authorList>
    </citation>
    <scope>NUCLEOTIDE SEQUENCE [GENOMIC DNA]</scope>
    <scope>VARIANTS SER-58; SER-70; PRO-77; GLN-91; ARG-104; ALA-184; ALA-191; SER-311; ARG-330 AND ASN-366</scope>
    <source>
        <strain>cv. Cvi-0</strain>
    </source>
</reference>
<reference key="3">
    <citation type="journal article" date="1999" name="Nature">
        <title>Sequence and analysis of chromosome 4 of the plant Arabidopsis thaliana.</title>
        <authorList>
            <person name="Mayer K.F.X."/>
            <person name="Schueller C."/>
            <person name="Wambutt R."/>
            <person name="Murphy G."/>
            <person name="Volckaert G."/>
            <person name="Pohl T."/>
            <person name="Duesterhoeft A."/>
            <person name="Stiekema W."/>
            <person name="Entian K.-D."/>
            <person name="Terryn N."/>
            <person name="Harris B."/>
            <person name="Ansorge W."/>
            <person name="Brandt P."/>
            <person name="Grivell L.A."/>
            <person name="Rieger M."/>
            <person name="Weichselgartner M."/>
            <person name="de Simone V."/>
            <person name="Obermaier B."/>
            <person name="Mache R."/>
            <person name="Mueller M."/>
            <person name="Kreis M."/>
            <person name="Delseny M."/>
            <person name="Puigdomenech P."/>
            <person name="Watson M."/>
            <person name="Schmidtheini T."/>
            <person name="Reichert B."/>
            <person name="Portetelle D."/>
            <person name="Perez-Alonso M."/>
            <person name="Boutry M."/>
            <person name="Bancroft I."/>
            <person name="Vos P."/>
            <person name="Hoheisel J."/>
            <person name="Zimmermann W."/>
            <person name="Wedler H."/>
            <person name="Ridley P."/>
            <person name="Langham S.-A."/>
            <person name="McCullagh B."/>
            <person name="Bilham L."/>
            <person name="Robben J."/>
            <person name="van der Schueren J."/>
            <person name="Grymonprez B."/>
            <person name="Chuang Y.-J."/>
            <person name="Vandenbussche F."/>
            <person name="Braeken M."/>
            <person name="Weltjens I."/>
            <person name="Voet M."/>
            <person name="Bastiaens I."/>
            <person name="Aert R."/>
            <person name="Defoor E."/>
            <person name="Weitzenegger T."/>
            <person name="Bothe G."/>
            <person name="Ramsperger U."/>
            <person name="Hilbert H."/>
            <person name="Braun M."/>
            <person name="Holzer E."/>
            <person name="Brandt A."/>
            <person name="Peters S."/>
            <person name="van Staveren M."/>
            <person name="Dirkse W."/>
            <person name="Mooijman P."/>
            <person name="Klein Lankhorst R."/>
            <person name="Rose M."/>
            <person name="Hauf J."/>
            <person name="Koetter P."/>
            <person name="Berneiser S."/>
            <person name="Hempel S."/>
            <person name="Feldpausch M."/>
            <person name="Lamberth S."/>
            <person name="Van den Daele H."/>
            <person name="De Keyser A."/>
            <person name="Buysshaert C."/>
            <person name="Gielen J."/>
            <person name="Villarroel R."/>
            <person name="De Clercq R."/>
            <person name="van Montagu M."/>
            <person name="Rogers J."/>
            <person name="Cronin A."/>
            <person name="Quail M.A."/>
            <person name="Bray-Allen S."/>
            <person name="Clark L."/>
            <person name="Doggett J."/>
            <person name="Hall S."/>
            <person name="Kay M."/>
            <person name="Lennard N."/>
            <person name="McLay K."/>
            <person name="Mayes R."/>
            <person name="Pettett A."/>
            <person name="Rajandream M.A."/>
            <person name="Lyne M."/>
            <person name="Benes V."/>
            <person name="Rechmann S."/>
            <person name="Borkova D."/>
            <person name="Bloecker H."/>
            <person name="Scharfe M."/>
            <person name="Grimm M."/>
            <person name="Loehnert T.-H."/>
            <person name="Dose S."/>
            <person name="de Haan M."/>
            <person name="Maarse A.C."/>
            <person name="Schaefer M."/>
            <person name="Mueller-Auer S."/>
            <person name="Gabel C."/>
            <person name="Fuchs M."/>
            <person name="Fartmann B."/>
            <person name="Granderath K."/>
            <person name="Dauner D."/>
            <person name="Herzl A."/>
            <person name="Neumann S."/>
            <person name="Argiriou A."/>
            <person name="Vitale D."/>
            <person name="Liguori R."/>
            <person name="Piravandi E."/>
            <person name="Massenet O."/>
            <person name="Quigley F."/>
            <person name="Clabauld G."/>
            <person name="Muendlein A."/>
            <person name="Felber R."/>
            <person name="Schnabl S."/>
            <person name="Hiller R."/>
            <person name="Schmidt W."/>
            <person name="Lecharny A."/>
            <person name="Aubourg S."/>
            <person name="Chefdor F."/>
            <person name="Cooke R."/>
            <person name="Berger C."/>
            <person name="Monfort A."/>
            <person name="Casacuberta E."/>
            <person name="Gibbons T."/>
            <person name="Weber N."/>
            <person name="Vandenbol M."/>
            <person name="Bargues M."/>
            <person name="Terol J."/>
            <person name="Torres A."/>
            <person name="Perez-Perez A."/>
            <person name="Purnelle B."/>
            <person name="Bent E."/>
            <person name="Johnson S."/>
            <person name="Tacon D."/>
            <person name="Jesse T."/>
            <person name="Heijnen L."/>
            <person name="Schwarz S."/>
            <person name="Scholler P."/>
            <person name="Heber S."/>
            <person name="Francs P."/>
            <person name="Bielke C."/>
            <person name="Frishman D."/>
            <person name="Haase D."/>
            <person name="Lemcke K."/>
            <person name="Mewes H.-W."/>
            <person name="Stocker S."/>
            <person name="Zaccaria P."/>
            <person name="Bevan M."/>
            <person name="Wilson R.K."/>
            <person name="de la Bastide M."/>
            <person name="Habermann K."/>
            <person name="Parnell L."/>
            <person name="Dedhia N."/>
            <person name="Gnoj L."/>
            <person name="Schutz K."/>
            <person name="Huang E."/>
            <person name="Spiegel L."/>
            <person name="Sekhon M."/>
            <person name="Murray J."/>
            <person name="Sheet P."/>
            <person name="Cordes M."/>
            <person name="Abu-Threideh J."/>
            <person name="Stoneking T."/>
            <person name="Kalicki J."/>
            <person name="Graves T."/>
            <person name="Harmon G."/>
            <person name="Edwards J."/>
            <person name="Latreille P."/>
            <person name="Courtney L."/>
            <person name="Cloud J."/>
            <person name="Abbott A."/>
            <person name="Scott K."/>
            <person name="Johnson D."/>
            <person name="Minx P."/>
            <person name="Bentley D."/>
            <person name="Fulton B."/>
            <person name="Miller N."/>
            <person name="Greco T."/>
            <person name="Kemp K."/>
            <person name="Kramer J."/>
            <person name="Fulton L."/>
            <person name="Mardis E."/>
            <person name="Dante M."/>
            <person name="Pepin K."/>
            <person name="Hillier L.W."/>
            <person name="Nelson J."/>
            <person name="Spieth J."/>
            <person name="Ryan E."/>
            <person name="Andrews S."/>
            <person name="Geisel C."/>
            <person name="Layman D."/>
            <person name="Du H."/>
            <person name="Ali J."/>
            <person name="Berghoff A."/>
            <person name="Jones K."/>
            <person name="Drone K."/>
            <person name="Cotton M."/>
            <person name="Joshu C."/>
            <person name="Antonoiu B."/>
            <person name="Zidanic M."/>
            <person name="Strong C."/>
            <person name="Sun H."/>
            <person name="Lamar B."/>
            <person name="Yordan C."/>
            <person name="Ma P."/>
            <person name="Zhong J."/>
            <person name="Preston R."/>
            <person name="Vil D."/>
            <person name="Shekher M."/>
            <person name="Matero A."/>
            <person name="Shah R."/>
            <person name="Swaby I.K."/>
            <person name="O'Shaughnessy A."/>
            <person name="Rodriguez M."/>
            <person name="Hoffman J."/>
            <person name="Till S."/>
            <person name="Granat S."/>
            <person name="Shohdy N."/>
            <person name="Hasegawa A."/>
            <person name="Hameed A."/>
            <person name="Lodhi M."/>
            <person name="Johnson A."/>
            <person name="Chen E."/>
            <person name="Marra M.A."/>
            <person name="Martienssen R."/>
            <person name="McCombie W.R."/>
        </authorList>
    </citation>
    <scope>NUCLEOTIDE SEQUENCE [LARGE SCALE GENOMIC DNA]</scope>
    <source>
        <strain>cv. Columbia</strain>
    </source>
</reference>
<reference key="4">
    <citation type="journal article" date="2017" name="Plant J.">
        <title>Araport11: a complete reannotation of the Arabidopsis thaliana reference genome.</title>
        <authorList>
            <person name="Cheng C.Y."/>
            <person name="Krishnakumar V."/>
            <person name="Chan A.P."/>
            <person name="Thibaud-Nissen F."/>
            <person name="Schobel S."/>
            <person name="Town C.D."/>
        </authorList>
    </citation>
    <scope>GENOME REANNOTATION</scope>
    <source>
        <strain>cv. Columbia</strain>
    </source>
</reference>
<reference key="5">
    <citation type="journal article" date="2001" name="Trends Plant Sci.">
        <title>The U-box protein family in plants.</title>
        <authorList>
            <person name="Azevedo C."/>
            <person name="Santos-Rosa M.J."/>
            <person name="Shirasu K."/>
        </authorList>
    </citation>
    <scope>GENE FAMILY ORGANIZATION</scope>
    <scope>NOMENCLATURE</scope>
</reference>
<reference key="6">
    <citation type="journal article" date="2004" name="Plant Physiol.">
        <title>A large complement of the predicted Arabidopsis ARM repeat proteins are members of the U-box E3 ubiquitin ligase family.</title>
        <authorList>
            <person name="Mudgil Y."/>
            <person name="Shiu S.-H."/>
            <person name="Stone S.L."/>
            <person name="Salt J.N."/>
            <person name="Goring D.R."/>
        </authorList>
    </citation>
    <scope>GENE FAMILY ORGANIZATION</scope>
</reference>
<reference key="7">
    <citation type="journal article" date="2007" name="Curr. Biol.">
        <title>A cryptic modifier causing transient self-incompatibility in Arabidopsis thaliana.</title>
        <authorList>
            <person name="Liu P."/>
            <person name="Sherman-Broyles S."/>
            <person name="Nasrallah M.E."/>
            <person name="Nasrallah J.B."/>
        </authorList>
    </citation>
    <scope>FUNCTION</scope>
    <scope>TISSUE SPECIFICITY</scope>
</reference>